<comment type="function">
    <text evidence="1">An RNase that has 5'-3' exonuclease and possibly endoonuclease activity. Involved in maturation of rRNA and in some organisms also mRNA maturation and/or decay (By similarity).</text>
</comment>
<comment type="cofactor">
    <cofactor evidence="2">
        <name>Zn(2+)</name>
        <dbReference type="ChEBI" id="CHEBI:29105"/>
    </cofactor>
    <text evidence="2">Binds up to 2 Zn(2+) ions per subunit. It is not clear if Zn(2+) or Mg(2+) is physiologically important.</text>
</comment>
<comment type="subunit">
    <text evidence="2">Homodimer, may be a subunit of the RNA degradosome.</text>
</comment>
<comment type="subcellular location">
    <subcellularLocation>
        <location evidence="2">Cytoplasm</location>
    </subcellularLocation>
</comment>
<comment type="similarity">
    <text evidence="2">Belongs to the metallo-beta-lactamase superfamily. RNA-metabolizing metallo-beta-lactamase-like family. Bacterial RNase J subfamily.</text>
</comment>
<organism>
    <name type="scientific">Staphylococcus aureus (strain MW2)</name>
    <dbReference type="NCBI Taxonomy" id="196620"/>
    <lineage>
        <taxon>Bacteria</taxon>
        <taxon>Bacillati</taxon>
        <taxon>Bacillota</taxon>
        <taxon>Bacilli</taxon>
        <taxon>Bacillales</taxon>
        <taxon>Staphylococcaceae</taxon>
        <taxon>Staphylococcus</taxon>
    </lineage>
</organism>
<accession>Q7A115</accession>
<protein>
    <recommendedName>
        <fullName evidence="2">Ribonuclease J 2</fullName>
        <shortName evidence="2">RNase J2</shortName>
        <ecNumber evidence="2">3.1.-.-</ecNumber>
    </recommendedName>
</protein>
<dbReference type="EC" id="3.1.-.-" evidence="2"/>
<dbReference type="EMBL" id="BA000033">
    <property type="protein sequence ID" value="BAB95023.1"/>
    <property type="molecule type" value="Genomic_DNA"/>
</dbReference>
<dbReference type="SMR" id="Q7A115"/>
<dbReference type="KEGG" id="sam:MW1158"/>
<dbReference type="HOGENOM" id="CLU_008727_3_1_9"/>
<dbReference type="GO" id="GO:0005737">
    <property type="term" value="C:cytoplasm"/>
    <property type="evidence" value="ECO:0007669"/>
    <property type="project" value="UniProtKB-SubCell"/>
</dbReference>
<dbReference type="GO" id="GO:0004534">
    <property type="term" value="F:5'-3' RNA exonuclease activity"/>
    <property type="evidence" value="ECO:0007669"/>
    <property type="project" value="UniProtKB-UniRule"/>
</dbReference>
<dbReference type="GO" id="GO:0003723">
    <property type="term" value="F:RNA binding"/>
    <property type="evidence" value="ECO:0007669"/>
    <property type="project" value="UniProtKB-UniRule"/>
</dbReference>
<dbReference type="GO" id="GO:0004521">
    <property type="term" value="F:RNA endonuclease activity"/>
    <property type="evidence" value="ECO:0007669"/>
    <property type="project" value="UniProtKB-UniRule"/>
</dbReference>
<dbReference type="GO" id="GO:0008270">
    <property type="term" value="F:zinc ion binding"/>
    <property type="evidence" value="ECO:0007669"/>
    <property type="project" value="InterPro"/>
</dbReference>
<dbReference type="GO" id="GO:0006364">
    <property type="term" value="P:rRNA processing"/>
    <property type="evidence" value="ECO:0007669"/>
    <property type="project" value="UniProtKB-UniRule"/>
</dbReference>
<dbReference type="CDD" id="cd07714">
    <property type="entry name" value="RNaseJ_MBL-fold"/>
    <property type="match status" value="1"/>
</dbReference>
<dbReference type="FunFam" id="3.10.20.580:FF:000001">
    <property type="entry name" value="Ribonuclease J"/>
    <property type="match status" value="1"/>
</dbReference>
<dbReference type="FunFam" id="3.40.50.10710:FF:000002">
    <property type="entry name" value="Ribonuclease J 2"/>
    <property type="match status" value="1"/>
</dbReference>
<dbReference type="Gene3D" id="3.10.20.580">
    <property type="match status" value="1"/>
</dbReference>
<dbReference type="Gene3D" id="3.40.50.10710">
    <property type="entry name" value="Metallo-hydrolase/oxidoreductase"/>
    <property type="match status" value="1"/>
</dbReference>
<dbReference type="Gene3D" id="3.60.15.10">
    <property type="entry name" value="Ribonuclease Z/Hydroxyacylglutathione hydrolase-like"/>
    <property type="match status" value="1"/>
</dbReference>
<dbReference type="HAMAP" id="MF_01491">
    <property type="entry name" value="RNase_J_bact"/>
    <property type="match status" value="1"/>
</dbReference>
<dbReference type="InterPro" id="IPR001279">
    <property type="entry name" value="Metallo-B-lactamas"/>
</dbReference>
<dbReference type="InterPro" id="IPR036866">
    <property type="entry name" value="RibonucZ/Hydroxyglut_hydro"/>
</dbReference>
<dbReference type="InterPro" id="IPR011108">
    <property type="entry name" value="RMMBL"/>
</dbReference>
<dbReference type="InterPro" id="IPR004613">
    <property type="entry name" value="RNase_J"/>
</dbReference>
<dbReference type="InterPro" id="IPR042173">
    <property type="entry name" value="RNase_J_2"/>
</dbReference>
<dbReference type="InterPro" id="IPR055132">
    <property type="entry name" value="RNase_J_b_CASP"/>
</dbReference>
<dbReference type="InterPro" id="IPR030854">
    <property type="entry name" value="RNase_J_bac"/>
</dbReference>
<dbReference type="InterPro" id="IPR041636">
    <property type="entry name" value="RNase_J_C"/>
</dbReference>
<dbReference type="NCBIfam" id="TIGR00649">
    <property type="entry name" value="MG423"/>
    <property type="match status" value="1"/>
</dbReference>
<dbReference type="PANTHER" id="PTHR43694">
    <property type="entry name" value="RIBONUCLEASE J"/>
    <property type="match status" value="1"/>
</dbReference>
<dbReference type="PANTHER" id="PTHR43694:SF4">
    <property type="entry name" value="RIBONUCLEASE J 2"/>
    <property type="match status" value="1"/>
</dbReference>
<dbReference type="Pfam" id="PF00753">
    <property type="entry name" value="Lactamase_B"/>
    <property type="match status" value="1"/>
</dbReference>
<dbReference type="Pfam" id="PF07521">
    <property type="entry name" value="RMMBL"/>
    <property type="match status" value="1"/>
</dbReference>
<dbReference type="Pfam" id="PF22505">
    <property type="entry name" value="RNase_J_b_CASP"/>
    <property type="match status" value="1"/>
</dbReference>
<dbReference type="Pfam" id="PF17770">
    <property type="entry name" value="RNase_J_C"/>
    <property type="match status" value="1"/>
</dbReference>
<dbReference type="PIRSF" id="PIRSF004803">
    <property type="entry name" value="RnjA"/>
    <property type="match status" value="1"/>
</dbReference>
<dbReference type="SMART" id="SM00849">
    <property type="entry name" value="Lactamase_B"/>
    <property type="match status" value="1"/>
</dbReference>
<dbReference type="SUPFAM" id="SSF56281">
    <property type="entry name" value="Metallo-hydrolase/oxidoreductase"/>
    <property type="match status" value="1"/>
</dbReference>
<feature type="chain" id="PRO_0000286850" description="Ribonuclease J 2">
    <location>
        <begin position="1"/>
        <end position="557"/>
    </location>
</feature>
<feature type="binding site" evidence="2">
    <location>
        <position position="76"/>
    </location>
    <ligand>
        <name>Zn(2+)</name>
        <dbReference type="ChEBI" id="CHEBI:29105"/>
        <note>catalytic</note>
    </ligand>
</feature>
<feature type="binding site" evidence="2">
    <location>
        <position position="78"/>
    </location>
    <ligand>
        <name>Zn(2+)</name>
        <dbReference type="ChEBI" id="CHEBI:29105"/>
        <note>catalytic</note>
    </ligand>
</feature>
<feature type="binding site" evidence="2">
    <location>
        <position position="144"/>
    </location>
    <ligand>
        <name>Zn(2+)</name>
        <dbReference type="ChEBI" id="CHEBI:29105"/>
        <note>catalytic</note>
    </ligand>
</feature>
<feature type="binding site" evidence="2">
    <location>
        <position position="166"/>
    </location>
    <ligand>
        <name>Zn(2+)</name>
        <dbReference type="ChEBI" id="CHEBI:29105"/>
        <note>catalytic</note>
    </ligand>
</feature>
<feature type="binding site" evidence="2">
    <location>
        <begin position="366"/>
        <end position="370"/>
    </location>
    <ligand>
        <name>substrate</name>
    </ligand>
</feature>
<name>RNJ2_STAAW</name>
<proteinExistence type="inferred from homology"/>
<sequence>MSLIKKKNKDIRIIPLGGVGEIAKNMYIVEVDDEMFMLDAGLMFPEDEMLGIDIVIPDISYVLENKDKLKGIFLTHGHEHAIGAVSYVLEQLDAPVYGSKLTIALIKENMKARNIDKKVRYYTVNNDSIMRFKNVNISFFNTTHSIPDSLGVCIHTSYGAIVYTGEFKFDQSLHGHYAPDIKRMAEIGEEGVFVLISDSTEAEKPGYNTPENVIEHHMYDAFAKVRGRLIVSCYASNFIRIQQVLNIASKLNRKVSFLGRSLESSFNIARKMGYFDIPKDLLIPITEVDNYPKNEVIIIATGMQGEPVEALSQMAQHKHKIMNIEEGDSVFLAITASANMEVIIANTLNELVRAGAHIIPNNKKIHASSHGCMEELKMMINIMKPEYFIPVQGEFKMQIAHAKLAAEAGVAPEKIFLVEKGDVINYNGKDMILNEKVNSGNILIDGIGIGDVGNIVLRDRHLLAEDGIFIAVVTLDPKNRRIAAGPEIQSRGFVYVRESEDLLREAEEKVREIVEAGLQEKRIEWSEIKQNMRDQISKLLFESTKRRPMIIPVISEI</sequence>
<evidence type="ECO:0000250" key="1"/>
<evidence type="ECO:0000255" key="2">
    <source>
        <dbReference type="HAMAP-Rule" id="MF_01491"/>
    </source>
</evidence>
<keyword id="KW-0963">Cytoplasm</keyword>
<keyword id="KW-0255">Endonuclease</keyword>
<keyword id="KW-0269">Exonuclease</keyword>
<keyword id="KW-0378">Hydrolase</keyword>
<keyword id="KW-0479">Metal-binding</keyword>
<keyword id="KW-0540">Nuclease</keyword>
<keyword id="KW-0694">RNA-binding</keyword>
<keyword id="KW-0698">rRNA processing</keyword>
<keyword id="KW-0862">Zinc</keyword>
<gene>
    <name evidence="2" type="primary">rnj2</name>
    <name type="ordered locus">MW1158</name>
</gene>
<reference key="1">
    <citation type="journal article" date="2002" name="Lancet">
        <title>Genome and virulence determinants of high virulence community-acquired MRSA.</title>
        <authorList>
            <person name="Baba T."/>
            <person name="Takeuchi F."/>
            <person name="Kuroda M."/>
            <person name="Yuzawa H."/>
            <person name="Aoki K."/>
            <person name="Oguchi A."/>
            <person name="Nagai Y."/>
            <person name="Iwama N."/>
            <person name="Asano K."/>
            <person name="Naimi T."/>
            <person name="Kuroda H."/>
            <person name="Cui L."/>
            <person name="Yamamoto K."/>
            <person name="Hiramatsu K."/>
        </authorList>
    </citation>
    <scope>NUCLEOTIDE SEQUENCE [LARGE SCALE GENOMIC DNA]</scope>
    <source>
        <strain>MW2</strain>
    </source>
</reference>